<sequence length="215" mass="25244">MASATLPAWIKMPSFLKKILKLRGRRQEDESRSRMLSDSSTQSYQVNQLTSEETEAGSTIPSTPSKGQALPTEPKVRAREKSRHRRPKIIDQVRRVESLGEQASQRQKHMLETLINKIYTGPLGEELVQTLYLRIWAMEETPESLKILQMREDIRDQVLKMKTERWLRTLIRGEKTKLKDFQKRYEEVHPYLMKEKVEQIIMEEAWSLAAHIVQE</sequence>
<keyword id="KW-0024">Alternative initiation</keyword>
<keyword id="KW-1035">Host cytoplasm</keyword>
<keyword id="KW-0945">Host-virus interaction</keyword>
<keyword id="KW-1090">Inhibition of host innate immune response by virus</keyword>
<keyword id="KW-1114">Inhibition of host interferon signaling pathway by virus</keyword>
<keyword id="KW-1105">Inhibition of host STAT1 by virus</keyword>
<keyword id="KW-1106">Inhibition of host STAT2 by virus</keyword>
<keyword id="KW-0922">Interferon antiviral system evasion</keyword>
<keyword id="KW-0899">Viral immunoevasion</keyword>
<reference key="1">
    <citation type="journal article" date="2001" name="Virus Genes">
        <title>Conserved and non-conserved regions in the Sendai virus genome: evolution of a gene possessing overlapping reading frames.</title>
        <authorList>
            <person name="Fujii Y."/>
            <person name="Kiyotani K."/>
            <person name="Yoshida T."/>
            <person name="Sakaguchi T."/>
        </authorList>
    </citation>
    <scope>NUCLEOTIDE SEQUENCE [GENOMIC RNA]</scope>
</reference>
<reference key="2">
    <citation type="journal article" date="2002" name="J. Virol.">
        <title>Involvement of the leader sequence in Sendai virus pathogenesis revealed by recovery of a pathogenic field isolate from cDNA.</title>
        <authorList>
            <person name="Fujii Y."/>
            <person name="Sakaguchi T."/>
            <person name="Kiyotani K."/>
            <person name="Huang C."/>
            <person name="Fukuhara N."/>
            <person name="Egi Y."/>
            <person name="Yoshida T."/>
        </authorList>
    </citation>
    <scope>NUCLEOTIDE SEQUENCE [GENOMIC RNA]</scope>
</reference>
<reference key="3">
    <citation type="journal article" date="2002" name="Virus Genes">
        <title>Identification of mutations associated with attenuation of virulence of a field Sendai virus isolate by egg passage.</title>
        <authorList>
            <person name="Fujii Y."/>
            <person name="Sakaguchi T."/>
            <person name="Kiyotani K."/>
            <person name="Huang C."/>
            <person name="Fukuhara N."/>
            <person name="Yoshida T."/>
        </authorList>
    </citation>
    <scope>NUCLEOTIDE SEQUENCE [GENOMIC RNA]</scope>
    <source>
        <strain>Isolate E15cl2</strain>
        <strain>Isolate E30cl2</strain>
        <strain>Isolate E30M15cl5</strain>
    </source>
</reference>
<reference key="4">
    <citation type="submission" date="2001-07" db="EMBL/GenBank/DDBJ databases">
        <authorList>
            <person name="Fujii Y."/>
            <person name="Kiyotani K."/>
            <person name="Huang C."/>
            <person name="Fukuhara N."/>
            <person name="Egi K."/>
            <person name="Yoshida T."/>
            <person name="Sakaguchi T."/>
        </authorList>
    </citation>
    <scope>NUCLEOTIDE SEQUENCE [GENOMIC RNA]</scope>
    <source>
        <strain>Isolate E50cl9</strain>
    </source>
</reference>
<feature type="initiator methionine" description="Removed; by host" evidence="1">
    <location>
        <position position="1"/>
    </location>
</feature>
<feature type="chain" id="PRO_0000039393" description="Protein C'" evidence="5">
    <location>
        <begin position="2"/>
        <end position="215"/>
    </location>
</feature>
<feature type="region of interest" description="Disordered" evidence="2">
    <location>
        <begin position="12"/>
        <end position="34"/>
    </location>
</feature>
<feature type="region of interest" description="Involved in self-degradation and in host STAT1 degradation" evidence="2">
    <location>
        <begin position="15"/>
        <end position="22"/>
    </location>
</feature>
<feature type="compositionally biased region" description="Basic and acidic residues" evidence="4">
    <location>
        <begin position="25"/>
        <end position="35"/>
    </location>
</feature>
<feature type="compositionally biased region" description="Polar residues" evidence="4">
    <location>
        <begin position="36"/>
        <end position="66"/>
    </location>
</feature>
<feature type="splice variant" id="VSP_018932" description="In isoform Y1." evidence="5">
    <location>
        <begin position="1"/>
        <end position="34"/>
    </location>
</feature>
<feature type="splice variant" id="VSP_018931" description="In isoform C." evidence="5">
    <location>
        <begin position="1"/>
        <end position="11"/>
    </location>
</feature>
<comment type="function">
    <text evidence="3">The different products prevent the establishment of cellular antiviral state by blocking the interferon-alpha/beta (IFN-alpha/beta) and IFN-gamma signaling pathways. They inhibit IFN-alpha/beta induced tyrosine phosphorylation of STAT1 and STAT2. Blocking the IFN-alpha/beta pathway requires binding to STAT1 in the cytoplasm. They inhibit IFN-gamma induced serine phosphorylation of STAT1. Block the IFN-gamma pathway by binding to and stabilizing the parallel form of the STAT1 dimer, further inducing high-molecular-weight complex formation and inhibition of transcription by IFN-gamma. May also have a role in preventing the cell to enter apoptosis. Modulate regulation of viral transcription and replication. Overexpression inhibits the viral RNA polymerase. The absence of all C', C and Y1 proteins leads to viral delayed growth. Plays an important role in virion particles release. Modulates virion shape.</text>
</comment>
<comment type="subunit">
    <text evidence="3">The different isoforms interact (via C-terminus) with unphosphorylated and phosphorylated human STAT1 (via N-terminus), favoring the formation of parallel STAT1 homodimers. The different isoforms do not interact with host STAT2. C protein interacts with L protein; this interaction has an inhibitory effect on viral transcription and replication.</text>
</comment>
<comment type="subcellular location">
    <subcellularLocation>
        <location evidence="3">Host cytoplasm</location>
    </subcellularLocation>
    <text evidence="3">Protein C' seems to localize around the Golgi.</text>
</comment>
<comment type="alternative products">
    <event type="alternative initiation"/>
    <isoform>
        <id>Q9DUE0-1</id>
        <name>C'</name>
        <sequence type="displayed"/>
    </isoform>
    <isoform>
        <id>Q9DUE0-2</id>
        <name>C</name>
        <sequence type="described" ref="VSP_018931"/>
    </isoform>
    <isoform>
        <id>Q9DUE0-3</id>
        <name>Y1</name>
        <sequence type="described" ref="VSP_018932"/>
    </isoform>
</comment>
<comment type="domain">
    <text evidence="2">The disordered region at the N-terminus is involved in C protein self-degradation in trans. This self-degradation of C protein may play a role in the regulation of viral RNA synthesis. The disordered region at the N-terminus is also involved in the host STAT1 degradation in order to counteract the host innate antiviral response.</text>
</comment>
<comment type="PTM">
    <text evidence="2">Protein Y1 is produced not only by alternative initiation, but also by proteolytic cleavage of C'. Only alternative initiation is detected in vitro, whereas in vivo cleavage seems to be predominant.</text>
</comment>
<comment type="miscellaneous">
    <text evidence="3">The C protein is found in virion at a ratio of approximately 40 molecules per virion, presumably associated with the nucleocapsid.</text>
</comment>
<comment type="miscellaneous">
    <text evidence="5">The P/V/C gene has two overlapping open reading frames. One encodes the P/V/W proteins and the other the C/Y proteins.</text>
</comment>
<comment type="miscellaneous">
    <molecule>Isoform C'</molecule>
    <text>The initiator methionine is coded by an unusual start codon ACG.</text>
</comment>
<comment type="miscellaneous">
    <molecule>Isoform C</molecule>
    <text evidence="5">Most abundant isoform in infected cells.</text>
</comment>
<comment type="similarity">
    <text evidence="5">Belongs to the respirovirus protein C family.</text>
</comment>
<comment type="caution">
    <text evidence="5">The C' protein uses an unusual ACG start codon.</text>
</comment>
<organismHost>
    <name type="scientific">Cavia cutleri</name>
    <name type="common">Guinea pig</name>
    <dbReference type="NCBI Taxonomy" id="10144"/>
</organismHost>
<organismHost>
    <name type="scientific">Cricetidae sp.</name>
    <name type="common">Hamster</name>
    <dbReference type="NCBI Taxonomy" id="36483"/>
</organismHost>
<organismHost>
    <name type="scientific">Mus musculus</name>
    <name type="common">Mouse</name>
    <dbReference type="NCBI Taxonomy" id="10090"/>
</organismHost>
<organismHost>
    <name type="scientific">Rattus norvegicus</name>
    <name type="common">Rat</name>
    <dbReference type="NCBI Taxonomy" id="10116"/>
</organismHost>
<protein>
    <recommendedName>
        <fullName>Protein C'</fullName>
    </recommendedName>
</protein>
<name>C_SENDA</name>
<proteinExistence type="inferred from homology"/>
<dbReference type="EMBL" id="AB039658">
    <property type="protein sequence ID" value="BAB20022.1"/>
    <property type="molecule type" value="Genomic_RNA"/>
</dbReference>
<dbReference type="EMBL" id="AB065186">
    <property type="protein sequence ID" value="BAC79128.1"/>
    <property type="molecule type" value="Genomic_RNA"/>
</dbReference>
<dbReference type="EMBL" id="AB065187">
    <property type="protein sequence ID" value="BAC07508.1"/>
    <property type="molecule type" value="Genomic_RNA"/>
</dbReference>
<dbReference type="EMBL" id="AB065188">
    <property type="protein sequence ID" value="BAC79136.1"/>
    <property type="molecule type" value="Genomic_RNA"/>
</dbReference>
<dbReference type="EMBL" id="AB065189">
    <property type="protein sequence ID" value="BAC79144.1"/>
    <property type="molecule type" value="Genomic_RNA"/>
</dbReference>
<dbReference type="SMR" id="Q9DUE0"/>
<dbReference type="Proteomes" id="UP000007191">
    <property type="component" value="Genome"/>
</dbReference>
<dbReference type="Proteomes" id="UP000008510">
    <property type="component" value="Genome"/>
</dbReference>
<dbReference type="Proteomes" id="UP000008857">
    <property type="component" value="Genome"/>
</dbReference>
<dbReference type="Proteomes" id="UP000180650">
    <property type="component" value="Genome"/>
</dbReference>
<dbReference type="Proteomes" id="UP000180718">
    <property type="component" value="Genome"/>
</dbReference>
<dbReference type="GO" id="GO:0030430">
    <property type="term" value="C:host cell cytoplasm"/>
    <property type="evidence" value="ECO:0007669"/>
    <property type="project" value="UniProtKB-SubCell"/>
</dbReference>
<dbReference type="GO" id="GO:0052170">
    <property type="term" value="P:symbiont-mediated suppression of host innate immune response"/>
    <property type="evidence" value="ECO:0007669"/>
    <property type="project" value="UniProtKB-KW"/>
</dbReference>
<dbReference type="GO" id="GO:0039563">
    <property type="term" value="P:symbiont-mediated suppression of host JAK-STAT cascade via inhibition of STAT1 activity"/>
    <property type="evidence" value="ECO:0000250"/>
    <property type="project" value="UniProtKB"/>
</dbReference>
<dbReference type="GO" id="GO:0039564">
    <property type="term" value="P:symbiont-mediated suppression of host JAK-STAT cascade via inhibition of STAT2 activity"/>
    <property type="evidence" value="ECO:0007669"/>
    <property type="project" value="UniProtKB-KW"/>
</dbReference>
<dbReference type="GO" id="GO:0039502">
    <property type="term" value="P:symbiont-mediated suppression of host type I interferon-mediated signaling pathway"/>
    <property type="evidence" value="ECO:0007669"/>
    <property type="project" value="UniProtKB-KW"/>
</dbReference>
<dbReference type="InterPro" id="IPR002608">
    <property type="entry name" value="Paramyxo_C"/>
</dbReference>
<dbReference type="Pfam" id="PF01692">
    <property type="entry name" value="Paramyxo_C"/>
    <property type="match status" value="1"/>
</dbReference>
<evidence type="ECO:0000250" key="1"/>
<evidence type="ECO:0000250" key="2">
    <source>
        <dbReference type="UniProtKB" id="P04861"/>
    </source>
</evidence>
<evidence type="ECO:0000250" key="3">
    <source>
        <dbReference type="UniProtKB" id="P04862"/>
    </source>
</evidence>
<evidence type="ECO:0000256" key="4">
    <source>
        <dbReference type="SAM" id="MobiDB-lite"/>
    </source>
</evidence>
<evidence type="ECO:0000305" key="5"/>
<gene>
    <name type="primary">P/V/C</name>
</gene>
<accession>Q9DUE0</accession>
<organism>
    <name type="scientific">Sendai virus (strain Hamamatsu)</name>
    <name type="common">SeV</name>
    <dbReference type="NCBI Taxonomy" id="302271"/>
    <lineage>
        <taxon>Viruses</taxon>
        <taxon>Riboviria</taxon>
        <taxon>Orthornavirae</taxon>
        <taxon>Negarnaviricota</taxon>
        <taxon>Haploviricotina</taxon>
        <taxon>Monjiviricetes</taxon>
        <taxon>Mononegavirales</taxon>
        <taxon>Paramyxoviridae</taxon>
        <taxon>Feraresvirinae</taxon>
        <taxon>Respirovirus</taxon>
        <taxon>Respirovirus muris</taxon>
    </lineage>
</organism>